<name>GATC_BRUSU</name>
<feature type="chain" id="PRO_0000105284" description="Glutamyl-tRNA(Gln) amidotransferase subunit C">
    <location>
        <begin position="1"/>
        <end position="95"/>
    </location>
</feature>
<evidence type="ECO:0000255" key="1">
    <source>
        <dbReference type="HAMAP-Rule" id="MF_00122"/>
    </source>
</evidence>
<organism>
    <name type="scientific">Brucella suis biovar 1 (strain 1330)</name>
    <dbReference type="NCBI Taxonomy" id="204722"/>
    <lineage>
        <taxon>Bacteria</taxon>
        <taxon>Pseudomonadati</taxon>
        <taxon>Pseudomonadota</taxon>
        <taxon>Alphaproteobacteria</taxon>
        <taxon>Hyphomicrobiales</taxon>
        <taxon>Brucellaceae</taxon>
        <taxon>Brucella/Ochrobactrum group</taxon>
        <taxon>Brucella</taxon>
    </lineage>
</organism>
<proteinExistence type="inferred from homology"/>
<dbReference type="EC" id="6.3.5.-" evidence="1"/>
<dbReference type="EMBL" id="AE014292">
    <property type="protein sequence ID" value="AAN33784.1"/>
    <property type="molecule type" value="Genomic_DNA"/>
</dbReference>
<dbReference type="EMBL" id="CP002998">
    <property type="protein sequence ID" value="AEM20061.1"/>
    <property type="molecule type" value="Genomic_DNA"/>
</dbReference>
<dbReference type="RefSeq" id="WP_002966038.1">
    <property type="nucleotide sequence ID" value="NZ_KN046805.1"/>
</dbReference>
<dbReference type="SMR" id="P64204"/>
<dbReference type="GeneID" id="97535281"/>
<dbReference type="KEGG" id="bms:BRA0595"/>
<dbReference type="KEGG" id="bsi:BS1330_II0590"/>
<dbReference type="PATRIC" id="fig|204722.21.peg.545"/>
<dbReference type="HOGENOM" id="CLU_105899_2_0_5"/>
<dbReference type="Proteomes" id="UP000007104">
    <property type="component" value="Chromosome II"/>
</dbReference>
<dbReference type="GO" id="GO:0050566">
    <property type="term" value="F:asparaginyl-tRNA synthase (glutamine-hydrolyzing) activity"/>
    <property type="evidence" value="ECO:0007669"/>
    <property type="project" value="RHEA"/>
</dbReference>
<dbReference type="GO" id="GO:0005524">
    <property type="term" value="F:ATP binding"/>
    <property type="evidence" value="ECO:0007669"/>
    <property type="project" value="UniProtKB-KW"/>
</dbReference>
<dbReference type="GO" id="GO:0050567">
    <property type="term" value="F:glutaminyl-tRNA synthase (glutamine-hydrolyzing) activity"/>
    <property type="evidence" value="ECO:0007669"/>
    <property type="project" value="UniProtKB-UniRule"/>
</dbReference>
<dbReference type="GO" id="GO:0070681">
    <property type="term" value="P:glutaminyl-tRNAGln biosynthesis via transamidation"/>
    <property type="evidence" value="ECO:0007669"/>
    <property type="project" value="TreeGrafter"/>
</dbReference>
<dbReference type="GO" id="GO:0006450">
    <property type="term" value="P:regulation of translational fidelity"/>
    <property type="evidence" value="ECO:0007669"/>
    <property type="project" value="InterPro"/>
</dbReference>
<dbReference type="GO" id="GO:0006412">
    <property type="term" value="P:translation"/>
    <property type="evidence" value="ECO:0007669"/>
    <property type="project" value="UniProtKB-UniRule"/>
</dbReference>
<dbReference type="Gene3D" id="1.10.20.60">
    <property type="entry name" value="Glu-tRNAGln amidotransferase C subunit, N-terminal domain"/>
    <property type="match status" value="1"/>
</dbReference>
<dbReference type="HAMAP" id="MF_00122">
    <property type="entry name" value="GatC"/>
    <property type="match status" value="1"/>
</dbReference>
<dbReference type="InterPro" id="IPR036113">
    <property type="entry name" value="Asp/Glu-ADT_sf_sub_c"/>
</dbReference>
<dbReference type="InterPro" id="IPR003837">
    <property type="entry name" value="GatC"/>
</dbReference>
<dbReference type="NCBIfam" id="TIGR00135">
    <property type="entry name" value="gatC"/>
    <property type="match status" value="1"/>
</dbReference>
<dbReference type="PANTHER" id="PTHR15004">
    <property type="entry name" value="GLUTAMYL-TRNA(GLN) AMIDOTRANSFERASE SUBUNIT C, MITOCHONDRIAL"/>
    <property type="match status" value="1"/>
</dbReference>
<dbReference type="PANTHER" id="PTHR15004:SF0">
    <property type="entry name" value="GLUTAMYL-TRNA(GLN) AMIDOTRANSFERASE SUBUNIT C, MITOCHONDRIAL"/>
    <property type="match status" value="1"/>
</dbReference>
<dbReference type="Pfam" id="PF02686">
    <property type="entry name" value="GatC"/>
    <property type="match status" value="1"/>
</dbReference>
<dbReference type="SUPFAM" id="SSF141000">
    <property type="entry name" value="Glu-tRNAGln amidotransferase C subunit"/>
    <property type="match status" value="1"/>
</dbReference>
<sequence length="95" mass="10303">MSVDISTVKRVAHLARIAVSEDDAERMTGELNAILGFVEQLNEVDVEGIEPMTSVTPMKMRMREDKVTDGGIAAAVVANAPVTEDNFFVVPKVVE</sequence>
<reference key="1">
    <citation type="journal article" date="2002" name="Proc. Natl. Acad. Sci. U.S.A.">
        <title>The Brucella suis genome reveals fundamental similarities between animal and plant pathogens and symbionts.</title>
        <authorList>
            <person name="Paulsen I.T."/>
            <person name="Seshadri R."/>
            <person name="Nelson K.E."/>
            <person name="Eisen J.A."/>
            <person name="Heidelberg J.F."/>
            <person name="Read T.D."/>
            <person name="Dodson R.J."/>
            <person name="Umayam L.A."/>
            <person name="Brinkac L.M."/>
            <person name="Beanan M.J."/>
            <person name="Daugherty S.C."/>
            <person name="DeBoy R.T."/>
            <person name="Durkin A.S."/>
            <person name="Kolonay J.F."/>
            <person name="Madupu R."/>
            <person name="Nelson W.C."/>
            <person name="Ayodeji B."/>
            <person name="Kraul M."/>
            <person name="Shetty J."/>
            <person name="Malek J.A."/>
            <person name="Van Aken S.E."/>
            <person name="Riedmuller S."/>
            <person name="Tettelin H."/>
            <person name="Gill S.R."/>
            <person name="White O."/>
            <person name="Salzberg S.L."/>
            <person name="Hoover D.L."/>
            <person name="Lindler L.E."/>
            <person name="Halling S.M."/>
            <person name="Boyle S.M."/>
            <person name="Fraser C.M."/>
        </authorList>
    </citation>
    <scope>NUCLEOTIDE SEQUENCE [LARGE SCALE GENOMIC DNA]</scope>
    <source>
        <strain>1330</strain>
    </source>
</reference>
<reference key="2">
    <citation type="journal article" date="2011" name="J. Bacteriol.">
        <title>Revised genome sequence of Brucella suis 1330.</title>
        <authorList>
            <person name="Tae H."/>
            <person name="Shallom S."/>
            <person name="Settlage R."/>
            <person name="Preston D."/>
            <person name="Adams L.G."/>
            <person name="Garner H.R."/>
        </authorList>
    </citation>
    <scope>NUCLEOTIDE SEQUENCE [LARGE SCALE GENOMIC DNA]</scope>
    <source>
        <strain>1330</strain>
    </source>
</reference>
<gene>
    <name evidence="1" type="primary">gatC</name>
    <name type="ordered locus">BRA0595</name>
    <name type="ordered locus">BS1330_II0590</name>
</gene>
<protein>
    <recommendedName>
        <fullName>Glutamyl-tRNA(Gln) amidotransferase subunit C</fullName>
        <shortName>Glu-ADT subunit C</shortName>
        <ecNumber evidence="1">6.3.5.-</ecNumber>
    </recommendedName>
</protein>
<accession>P64204</accession>
<accession>G0KCX3</accession>
<accession>Q8YC58</accession>
<keyword id="KW-0067">ATP-binding</keyword>
<keyword id="KW-0436">Ligase</keyword>
<keyword id="KW-0547">Nucleotide-binding</keyword>
<keyword id="KW-0648">Protein biosynthesis</keyword>
<comment type="function">
    <text evidence="1">Allows the formation of correctly charged Asn-tRNA(Asn) or Gln-tRNA(Gln) through the transamidation of misacylated Asp-tRNA(Asn) or Glu-tRNA(Gln) in organisms which lack either or both of asparaginyl-tRNA or glutaminyl-tRNA synthetases. The reaction takes place in the presence of glutamine and ATP through an activated phospho-Asp-tRNA(Asn) or phospho-Glu-tRNA(Gln).</text>
</comment>
<comment type="catalytic activity">
    <reaction evidence="1">
        <text>L-glutamyl-tRNA(Gln) + L-glutamine + ATP + H2O = L-glutaminyl-tRNA(Gln) + L-glutamate + ADP + phosphate + H(+)</text>
        <dbReference type="Rhea" id="RHEA:17521"/>
        <dbReference type="Rhea" id="RHEA-COMP:9681"/>
        <dbReference type="Rhea" id="RHEA-COMP:9684"/>
        <dbReference type="ChEBI" id="CHEBI:15377"/>
        <dbReference type="ChEBI" id="CHEBI:15378"/>
        <dbReference type="ChEBI" id="CHEBI:29985"/>
        <dbReference type="ChEBI" id="CHEBI:30616"/>
        <dbReference type="ChEBI" id="CHEBI:43474"/>
        <dbReference type="ChEBI" id="CHEBI:58359"/>
        <dbReference type="ChEBI" id="CHEBI:78520"/>
        <dbReference type="ChEBI" id="CHEBI:78521"/>
        <dbReference type="ChEBI" id="CHEBI:456216"/>
    </reaction>
</comment>
<comment type="catalytic activity">
    <reaction evidence="1">
        <text>L-aspartyl-tRNA(Asn) + L-glutamine + ATP + H2O = L-asparaginyl-tRNA(Asn) + L-glutamate + ADP + phosphate + 2 H(+)</text>
        <dbReference type="Rhea" id="RHEA:14513"/>
        <dbReference type="Rhea" id="RHEA-COMP:9674"/>
        <dbReference type="Rhea" id="RHEA-COMP:9677"/>
        <dbReference type="ChEBI" id="CHEBI:15377"/>
        <dbReference type="ChEBI" id="CHEBI:15378"/>
        <dbReference type="ChEBI" id="CHEBI:29985"/>
        <dbReference type="ChEBI" id="CHEBI:30616"/>
        <dbReference type="ChEBI" id="CHEBI:43474"/>
        <dbReference type="ChEBI" id="CHEBI:58359"/>
        <dbReference type="ChEBI" id="CHEBI:78515"/>
        <dbReference type="ChEBI" id="CHEBI:78516"/>
        <dbReference type="ChEBI" id="CHEBI:456216"/>
    </reaction>
</comment>
<comment type="subunit">
    <text evidence="1">Heterotrimer of A, B and C subunits.</text>
</comment>
<comment type="similarity">
    <text evidence="1">Belongs to the GatC family.</text>
</comment>